<proteinExistence type="evidence at transcript level"/>
<dbReference type="EC" id="3.4.24.-" evidence="1"/>
<dbReference type="EMBL" id="AL031254">
    <property type="protein sequence ID" value="CAB63429.2"/>
    <property type="molecule type" value="Genomic_DNA"/>
</dbReference>
<dbReference type="EMBL" id="AJ561202">
    <property type="protein sequence ID" value="CAD99205.1"/>
    <property type="molecule type" value="mRNA"/>
</dbReference>
<dbReference type="RefSeq" id="NP_001040902.1">
    <property type="nucleotide sequence ID" value="NM_001047437.2"/>
</dbReference>
<dbReference type="SMR" id="Q9U3S9"/>
<dbReference type="BioGRID" id="46666">
    <property type="interactions" value="1"/>
</dbReference>
<dbReference type="IntAct" id="Q9U3S9">
    <property type="interactions" value="1"/>
</dbReference>
<dbReference type="STRING" id="6239.4R79.1a.1"/>
<dbReference type="MEROPS" id="M12.A38"/>
<dbReference type="PaxDb" id="6239-4R79.1a"/>
<dbReference type="EnsemblMetazoa" id="4R79.1a.1">
    <property type="protein sequence ID" value="4R79.1a.1"/>
    <property type="gene ID" value="WBGene00003525"/>
</dbReference>
<dbReference type="GeneID" id="181796"/>
<dbReference type="KEGG" id="cel:CELE_4R79.1"/>
<dbReference type="UCSC" id="4R79.1a">
    <property type="organism name" value="c. elegans"/>
</dbReference>
<dbReference type="AGR" id="WB:WBGene00003525"/>
<dbReference type="CTD" id="181796"/>
<dbReference type="WormBase" id="4R79.1a">
    <property type="protein sequence ID" value="CE35820"/>
    <property type="gene ID" value="WBGene00003525"/>
    <property type="gene designation" value="nas-6"/>
</dbReference>
<dbReference type="eggNOG" id="KOG3714">
    <property type="taxonomic scope" value="Eukaryota"/>
</dbReference>
<dbReference type="GeneTree" id="ENSGT00940000171076"/>
<dbReference type="HOGENOM" id="CLU_017286_0_0_1"/>
<dbReference type="InParanoid" id="Q9U3S9"/>
<dbReference type="OMA" id="LNERQTW"/>
<dbReference type="OrthoDB" id="291007at2759"/>
<dbReference type="PhylomeDB" id="Q9U3S9"/>
<dbReference type="PRO" id="PR:Q9U3S9"/>
<dbReference type="Proteomes" id="UP000001940">
    <property type="component" value="Chromosome IV"/>
</dbReference>
<dbReference type="Bgee" id="WBGene00003525">
    <property type="expression patterns" value="Expressed in pharyngeal muscle cell (C elegans) and 3 other cell types or tissues"/>
</dbReference>
<dbReference type="ExpressionAtlas" id="Q9U3S9">
    <property type="expression patterns" value="baseline and differential"/>
</dbReference>
<dbReference type="GO" id="GO:0005576">
    <property type="term" value="C:extracellular region"/>
    <property type="evidence" value="ECO:0007669"/>
    <property type="project" value="UniProtKB-SubCell"/>
</dbReference>
<dbReference type="GO" id="GO:0004222">
    <property type="term" value="F:metalloendopeptidase activity"/>
    <property type="evidence" value="ECO:0000318"/>
    <property type="project" value="GO_Central"/>
</dbReference>
<dbReference type="GO" id="GO:0008270">
    <property type="term" value="F:zinc ion binding"/>
    <property type="evidence" value="ECO:0007669"/>
    <property type="project" value="InterPro"/>
</dbReference>
<dbReference type="GO" id="GO:0043050">
    <property type="term" value="P:nematode pharyngeal pumping"/>
    <property type="evidence" value="ECO:0000315"/>
    <property type="project" value="WormBase"/>
</dbReference>
<dbReference type="GO" id="GO:0160094">
    <property type="term" value="P:nematode pharynx development"/>
    <property type="evidence" value="ECO:0000315"/>
    <property type="project" value="WormBase"/>
</dbReference>
<dbReference type="GO" id="GO:0006508">
    <property type="term" value="P:proteolysis"/>
    <property type="evidence" value="ECO:0007669"/>
    <property type="project" value="UniProtKB-KW"/>
</dbReference>
<dbReference type="CDD" id="cd04280">
    <property type="entry name" value="ZnMc_astacin_like"/>
    <property type="match status" value="1"/>
</dbReference>
<dbReference type="FunFam" id="3.40.390.10:FF:000104">
    <property type="entry name" value="Metalloendopeptidase"/>
    <property type="match status" value="1"/>
</dbReference>
<dbReference type="FunFam" id="1.10.10.1940:FF:000002">
    <property type="entry name" value="PHAryngeal gland Toxin-related"/>
    <property type="match status" value="1"/>
</dbReference>
<dbReference type="Gene3D" id="1.10.10.1940">
    <property type="match status" value="1"/>
</dbReference>
<dbReference type="Gene3D" id="3.40.390.10">
    <property type="entry name" value="Collagenase (Catalytic Domain)"/>
    <property type="match status" value="1"/>
</dbReference>
<dbReference type="InterPro" id="IPR034035">
    <property type="entry name" value="Astacin-like_dom"/>
</dbReference>
<dbReference type="InterPro" id="IPR024079">
    <property type="entry name" value="MetalloPept_cat_dom_sf"/>
</dbReference>
<dbReference type="InterPro" id="IPR001506">
    <property type="entry name" value="Peptidase_M12A"/>
</dbReference>
<dbReference type="InterPro" id="IPR006026">
    <property type="entry name" value="Peptidase_Metallo"/>
</dbReference>
<dbReference type="InterPro" id="IPR003582">
    <property type="entry name" value="ShKT_dom"/>
</dbReference>
<dbReference type="PANTHER" id="PTHR10127">
    <property type="entry name" value="DISCOIDIN, CUB, EGF, LAMININ , AND ZINC METALLOPROTEASE DOMAIN CONTAINING"/>
    <property type="match status" value="1"/>
</dbReference>
<dbReference type="PANTHER" id="PTHR10127:SF829">
    <property type="entry name" value="ZINC METALLOPROTEINASE NAS-6"/>
    <property type="match status" value="1"/>
</dbReference>
<dbReference type="Pfam" id="PF01400">
    <property type="entry name" value="Astacin"/>
    <property type="match status" value="1"/>
</dbReference>
<dbReference type="Pfam" id="PF01549">
    <property type="entry name" value="ShK"/>
    <property type="match status" value="1"/>
</dbReference>
<dbReference type="PRINTS" id="PR00480">
    <property type="entry name" value="ASTACIN"/>
</dbReference>
<dbReference type="SMART" id="SM00254">
    <property type="entry name" value="ShKT"/>
    <property type="match status" value="1"/>
</dbReference>
<dbReference type="SMART" id="SM00235">
    <property type="entry name" value="ZnMc"/>
    <property type="match status" value="1"/>
</dbReference>
<dbReference type="SUPFAM" id="SSF55486">
    <property type="entry name" value="Metalloproteases ('zincins'), catalytic domain"/>
    <property type="match status" value="1"/>
</dbReference>
<dbReference type="PROSITE" id="PS51864">
    <property type="entry name" value="ASTACIN"/>
    <property type="match status" value="1"/>
</dbReference>
<dbReference type="PROSITE" id="PS51670">
    <property type="entry name" value="SHKT"/>
    <property type="match status" value="1"/>
</dbReference>
<dbReference type="PROSITE" id="PS00142">
    <property type="entry name" value="ZINC_PROTEASE"/>
    <property type="match status" value="1"/>
</dbReference>
<sequence length="344" mass="39278">MLDHVLLLTYCLVSTVVRSQPSADVFRSFAGYIPEDHRVTHHEWQNSGKFQGDIDGVDPNLLKLPEGPVLFNALKNKQLTWEGGVIPYEMDTAFSPNEIKILEKAFDSYRRTTCIRFEKREGQTDYLNIVKGYGCYSQVGRTGGKQEISLGRGCFFHEIIVHELMHSVGFWHEHSRADRDDHIKINWDNILPGMKSQFDKISAVLQDLQGENYDYKSIMHYDSTAFSRNGRNTIETVENGFTQVIGTAMDLSPLDIVKINKLYSCKTKKKEKVKPATTEEPHQLIPQVVDKNSVDSGEKCVDHFADCPHFAQYCTRASFFFVMKSYCPFTCKHCPGDRKLKKSG</sequence>
<comment type="function">
    <text evidence="2">Metalloprotease.</text>
</comment>
<comment type="cofactor">
    <cofactor evidence="5">
        <name>Zn(2+)</name>
        <dbReference type="ChEBI" id="CHEBI:29105"/>
    </cofactor>
    <text evidence="5">Binds 1 zinc ion per subunit.</text>
</comment>
<comment type="subcellular location">
    <subcellularLocation>
        <location evidence="7">Secreted</location>
    </subcellularLocation>
</comment>
<comment type="tissue specificity">
    <text evidence="6">Expressed in pharyngeal and body wall muscles, intestine, hypodermis and pharyngeal mc2 cells.</text>
</comment>
<comment type="disruption phenotype">
    <text evidence="6">10 percent of animals are arrested at the larval stage. Defects in the grinder of the pharynx result in reduced pharyngeal pumping rates and a slower growth. In a nas-7 (hd116) mutant background, growth is further reduced.</text>
</comment>
<gene>
    <name type="primary">nas-6</name>
    <name type="ORF">4R79.1</name>
</gene>
<reference key="1">
    <citation type="journal article" date="1998" name="Science">
        <title>Genome sequence of the nematode C. elegans: a platform for investigating biology.</title>
        <authorList>
            <consortium name="The C. elegans sequencing consortium"/>
        </authorList>
    </citation>
    <scope>NUCLEOTIDE SEQUENCE [LARGE SCALE GENOMIC DNA]</scope>
    <source>
        <strain>Bristol N2</strain>
    </source>
</reference>
<reference key="2">
    <citation type="journal article" date="2003" name="Eur. J. Biochem.">
        <title>The astacin protein family in Caenorhabditis elegans.</title>
        <authorList>
            <person name="Moehrlen F."/>
            <person name="Hutter H."/>
            <person name="Zwilling R."/>
        </authorList>
    </citation>
    <scope>NUCLEOTIDE SEQUENCE [MRNA] OF 261-294</scope>
    <scope>NOMENCLATURE</scope>
    <source>
        <strain>Bristol N2</strain>
    </source>
</reference>
<reference key="3">
    <citation type="journal article" date="2010" name="BMC Dev. Biol.">
        <title>Characterization of the astacin family of metalloproteases in C. elegans.</title>
        <authorList>
            <person name="Park J.O."/>
            <person name="Pan J."/>
            <person name="Moehrlen F."/>
            <person name="Schupp M.O."/>
            <person name="Johnsen R."/>
            <person name="Baillie D.L."/>
            <person name="Zapf R."/>
            <person name="Moerman D.G."/>
            <person name="Hutter H."/>
        </authorList>
    </citation>
    <scope>TISSUE SPECIFICITY</scope>
    <scope>DISRUPTION PHENOTYPE</scope>
</reference>
<accession>Q9U3S9</accession>
<accession>Q7Z0N6</accession>
<organism>
    <name type="scientific">Caenorhabditis elegans</name>
    <dbReference type="NCBI Taxonomy" id="6239"/>
    <lineage>
        <taxon>Eukaryota</taxon>
        <taxon>Metazoa</taxon>
        <taxon>Ecdysozoa</taxon>
        <taxon>Nematoda</taxon>
        <taxon>Chromadorea</taxon>
        <taxon>Rhabditida</taxon>
        <taxon>Rhabditina</taxon>
        <taxon>Rhabditomorpha</taxon>
        <taxon>Rhabditoidea</taxon>
        <taxon>Rhabditidae</taxon>
        <taxon>Peloderinae</taxon>
        <taxon>Caenorhabditis</taxon>
    </lineage>
</organism>
<keyword id="KW-1015">Disulfide bond</keyword>
<keyword id="KW-0378">Hydrolase</keyword>
<keyword id="KW-0479">Metal-binding</keyword>
<keyword id="KW-0482">Metalloprotease</keyword>
<keyword id="KW-0645">Protease</keyword>
<keyword id="KW-1185">Reference proteome</keyword>
<keyword id="KW-0964">Secreted</keyword>
<keyword id="KW-0732">Signal</keyword>
<keyword id="KW-0862">Zinc</keyword>
<keyword id="KW-0865">Zymogen</keyword>
<feature type="signal peptide" evidence="3">
    <location>
        <begin position="1"/>
        <end position="19"/>
    </location>
</feature>
<feature type="propeptide" id="PRO_0000442654" evidence="7">
    <location>
        <begin position="20"/>
        <end status="unknown"/>
    </location>
</feature>
<feature type="chain" id="PRO_0000028911" description="Zinc metalloproteinase nas-6">
    <location>
        <begin status="unknown"/>
        <end position="344"/>
    </location>
</feature>
<feature type="domain" description="Peptidase M12A" evidence="5">
    <location>
        <begin position="72"/>
        <end position="266"/>
    </location>
</feature>
<feature type="domain" description="ShKT" evidence="4">
    <location>
        <begin position="300"/>
        <end position="334"/>
    </location>
</feature>
<feature type="active site" evidence="5">
    <location>
        <position position="163"/>
    </location>
</feature>
<feature type="binding site" evidence="5">
    <location>
        <position position="162"/>
    </location>
    <ligand>
        <name>Zn(2+)</name>
        <dbReference type="ChEBI" id="CHEBI:29105"/>
        <note>catalytic</note>
    </ligand>
</feature>
<feature type="binding site" evidence="5">
    <location>
        <position position="166"/>
    </location>
    <ligand>
        <name>Zn(2+)</name>
        <dbReference type="ChEBI" id="CHEBI:29105"/>
        <note>catalytic</note>
    </ligand>
</feature>
<feature type="binding site" evidence="5">
    <location>
        <position position="172"/>
    </location>
    <ligand>
        <name>Zn(2+)</name>
        <dbReference type="ChEBI" id="CHEBI:29105"/>
        <note>catalytic</note>
    </ligand>
</feature>
<feature type="disulfide bond" evidence="5">
    <location>
        <begin position="114"/>
        <end position="265"/>
    </location>
</feature>
<feature type="disulfide bond" evidence="5">
    <location>
        <begin position="135"/>
        <end position="154"/>
    </location>
</feature>
<feature type="disulfide bond" evidence="4">
    <location>
        <begin position="300"/>
        <end position="334"/>
    </location>
</feature>
<feature type="disulfide bond" evidence="4">
    <location>
        <begin position="307"/>
        <end position="327"/>
    </location>
</feature>
<feature type="disulfide bond" evidence="4">
    <location>
        <begin position="314"/>
        <end position="331"/>
    </location>
</feature>
<name>NAS6_CAEEL</name>
<evidence type="ECO:0000250" key="1">
    <source>
        <dbReference type="UniProtKB" id="A8Q2D1"/>
    </source>
</evidence>
<evidence type="ECO:0000250" key="2">
    <source>
        <dbReference type="UniProtKB" id="P07584"/>
    </source>
</evidence>
<evidence type="ECO:0000255" key="3"/>
<evidence type="ECO:0000255" key="4">
    <source>
        <dbReference type="PROSITE-ProRule" id="PRU01005"/>
    </source>
</evidence>
<evidence type="ECO:0000255" key="5">
    <source>
        <dbReference type="PROSITE-ProRule" id="PRU01211"/>
    </source>
</evidence>
<evidence type="ECO:0000269" key="6">
    <source>
    </source>
</evidence>
<evidence type="ECO:0000305" key="7"/>
<protein>
    <recommendedName>
        <fullName>Zinc metalloproteinase nas-6</fullName>
        <ecNumber evidence="1">3.4.24.-</ecNumber>
    </recommendedName>
    <alternativeName>
        <fullName>Nematode astacin 6</fullName>
    </alternativeName>
</protein>